<name>CAY1_CONIM</name>
<comment type="function">
    <text evidence="1">Acts as a neurotoxin.</text>
</comment>
<comment type="subcellular location">
    <subcellularLocation>
        <location evidence="3">Secreted</location>
    </subcellularLocation>
</comment>
<comment type="tissue specificity">
    <text evidence="3">Expressed by the venom duct.</text>
</comment>
<comment type="miscellaneous">
    <text evidence="3">The mature peptide contains only 1 cysteine residue.</text>
</comment>
<comment type="similarity">
    <text evidence="3">Belongs to the conotoxin A superfamily.</text>
</comment>
<sequence>MGMRMMFTVFLLVVLATTVVPITLASATDGRNAAANARVSPVISKSSKKWCHPNPYTVG</sequence>
<dbReference type="EMBL" id="AJ011793">
    <property type="protein sequence ID" value="CAA09785.1"/>
    <property type="molecule type" value="mRNA"/>
</dbReference>
<dbReference type="ConoServer" id="77">
    <property type="toxin name" value="Im003 precursor"/>
</dbReference>
<dbReference type="GO" id="GO:0005576">
    <property type="term" value="C:extracellular region"/>
    <property type="evidence" value="ECO:0007669"/>
    <property type="project" value="UniProtKB-SubCell"/>
</dbReference>
<dbReference type="GO" id="GO:0030550">
    <property type="term" value="F:acetylcholine receptor inhibitor activity"/>
    <property type="evidence" value="ECO:0007669"/>
    <property type="project" value="InterPro"/>
</dbReference>
<dbReference type="GO" id="GO:0090729">
    <property type="term" value="F:toxin activity"/>
    <property type="evidence" value="ECO:0007669"/>
    <property type="project" value="UniProtKB-KW"/>
</dbReference>
<dbReference type="InterPro" id="IPR009958">
    <property type="entry name" value="Conotoxin_a-typ"/>
</dbReference>
<dbReference type="Pfam" id="PF07365">
    <property type="entry name" value="Toxin_8"/>
    <property type="match status" value="1"/>
</dbReference>
<evidence type="ECO:0000250" key="1"/>
<evidence type="ECO:0000255" key="2"/>
<evidence type="ECO:0000305" key="3"/>
<accession>O77256</accession>
<keyword id="KW-0165">Cleavage on pair of basic residues</keyword>
<keyword id="KW-0528">Neurotoxin</keyword>
<keyword id="KW-0964">Secreted</keyword>
<keyword id="KW-0732">Signal</keyword>
<keyword id="KW-0800">Toxin</keyword>
<protein>
    <recommendedName>
        <fullName>Putative conotoxin</fullName>
    </recommendedName>
</protein>
<feature type="signal peptide" evidence="2">
    <location>
        <begin position="1"/>
        <end position="25"/>
    </location>
</feature>
<feature type="propeptide" id="PRO_0000035122" evidence="2">
    <location>
        <begin position="26"/>
        <end position="47"/>
    </location>
</feature>
<feature type="peptide" id="PRO_0000035123" description="Putative conotoxin">
    <location>
        <begin position="50"/>
        <end position="59"/>
    </location>
</feature>
<proteinExistence type="inferred from homology"/>
<reference key="1">
    <citation type="submission" date="1998-10" db="EMBL/GenBank/DDBJ databases">
        <authorList>
            <person name="Zhao D."/>
        </authorList>
    </citation>
    <scope>NUCLEOTIDE SEQUENCE [MRNA]</scope>
</reference>
<organism>
    <name type="scientific">Conus imperialis</name>
    <name type="common">Imperial cone</name>
    <dbReference type="NCBI Taxonomy" id="35631"/>
    <lineage>
        <taxon>Eukaryota</taxon>
        <taxon>Metazoa</taxon>
        <taxon>Spiralia</taxon>
        <taxon>Lophotrochozoa</taxon>
        <taxon>Mollusca</taxon>
        <taxon>Gastropoda</taxon>
        <taxon>Caenogastropoda</taxon>
        <taxon>Neogastropoda</taxon>
        <taxon>Conoidea</taxon>
        <taxon>Conidae</taxon>
        <taxon>Conus</taxon>
        <taxon>Stephanoconus</taxon>
    </lineage>
</organism>